<evidence type="ECO:0000250" key="1">
    <source>
        <dbReference type="UniProtKB" id="P03354"/>
    </source>
</evidence>
<evidence type="ECO:0000250" key="2">
    <source>
        <dbReference type="UniProtKB" id="P10258"/>
    </source>
</evidence>
<evidence type="ECO:0000250" key="3">
    <source>
        <dbReference type="UniProtKB" id="P11283"/>
    </source>
</evidence>
<evidence type="ECO:0000255" key="4"/>
<evidence type="ECO:0000255" key="5">
    <source>
        <dbReference type="PROSITE-ProRule" id="PRU00047"/>
    </source>
</evidence>
<evidence type="ECO:0000255" key="6">
    <source>
        <dbReference type="PROSITE-ProRule" id="PRU00275"/>
    </source>
</evidence>
<evidence type="ECO:0000255" key="7">
    <source>
        <dbReference type="PROSITE-ProRule" id="PRU00405"/>
    </source>
</evidence>
<evidence type="ECO:0000255" key="8">
    <source>
        <dbReference type="PROSITE-ProRule" id="PRU00408"/>
    </source>
</evidence>
<evidence type="ECO:0000255" key="9">
    <source>
        <dbReference type="PROSITE-ProRule" id="PRU00450"/>
    </source>
</evidence>
<evidence type="ECO:0000255" key="10">
    <source>
        <dbReference type="PROSITE-ProRule" id="PRU00457"/>
    </source>
</evidence>
<evidence type="ECO:0000255" key="11">
    <source>
        <dbReference type="PROSITE-ProRule" id="PRU00506"/>
    </source>
</evidence>
<evidence type="ECO:0000256" key="12">
    <source>
        <dbReference type="SAM" id="MobiDB-lite"/>
    </source>
</evidence>
<evidence type="ECO:0000269" key="13">
    <source>
    </source>
</evidence>
<evidence type="ECO:0000269" key="14">
    <source>
    </source>
</evidence>
<evidence type="ECO:0000269" key="15">
    <source>
    </source>
</evidence>
<evidence type="ECO:0000269" key="16">
    <source>
    </source>
</evidence>
<evidence type="ECO:0000269" key="17">
    <source>
    </source>
</evidence>
<evidence type="ECO:0000303" key="18">
    <source>
    </source>
</evidence>
<evidence type="ECO:0000305" key="19"/>
<evidence type="ECO:0000305" key="20">
    <source>
    </source>
</evidence>
<evidence type="ECO:0007744" key="21">
    <source>
        <dbReference type="PDB" id="3JCA"/>
    </source>
</evidence>
<evidence type="ECO:0007744" key="22">
    <source>
        <dbReference type="PDB" id="5CZ1"/>
    </source>
</evidence>
<evidence type="ECO:0007744" key="23">
    <source>
        <dbReference type="PDB" id="5CZ2"/>
    </source>
</evidence>
<evidence type="ECO:0007744" key="24">
    <source>
        <dbReference type="PDB" id="5D7U"/>
    </source>
</evidence>
<evidence type="ECO:0007829" key="25">
    <source>
        <dbReference type="PDB" id="5CZ1"/>
    </source>
</evidence>
<evidence type="ECO:0007829" key="26">
    <source>
        <dbReference type="PDB" id="5CZ2"/>
    </source>
</evidence>
<evidence type="ECO:0007829" key="27">
    <source>
        <dbReference type="PDB" id="5D7U"/>
    </source>
</evidence>
<reference key="1">
    <citation type="journal article" date="1987" name="J. Virol.">
        <title>Complete nucleotide sequence of a milk-transmitted mouse mammary tumor virus: two frameshift suppression events are required for translation of gag and pol.</title>
        <authorList>
            <person name="Moore R."/>
            <person name="Dixon M."/>
            <person name="Smith R."/>
            <person name="Peters G."/>
            <person name="Dickson C."/>
        </authorList>
    </citation>
    <scope>NUCLEOTIDE SEQUENCE [GENOMIC RNA]</scope>
    <scope>RIBOSOMAL FRAMESHIFT</scope>
</reference>
<reference key="2">
    <citation type="journal article" date="1984" name="Science">
        <title>Major pol gene progenitors in the evolution of oncoviruses.</title>
        <authorList>
            <person name="Chiu I.-M."/>
            <person name="Callahan R."/>
            <person name="Tronick S.R."/>
            <person name="Schlom J."/>
            <person name="Aaronson S.A."/>
        </authorList>
    </citation>
    <scope>NUCLEOTIDE SEQUENCE [GENOMIC RNA] OF 1434-1613</scope>
</reference>
<reference key="3">
    <citation type="journal article" date="1978" name="Virology">
        <title>Serological and biochemical characterization of the mouse mammary tumor virus with localization of p10.</title>
        <authorList>
            <person name="Cardiff R.D."/>
            <person name="Puentes M.J."/>
            <person name="Young L.J."/>
            <person name="Smith G.H."/>
            <person name="Teramoto Y.A."/>
            <person name="Altrock B.W."/>
            <person name="Pratt T.S."/>
        </authorList>
    </citation>
    <scope>SUBCELLULAR LOCATION (MATRIX PROTEIN P10)</scope>
    <scope>SUBCELLULAR LOCATION (CAPSID PROTEIN P27)</scope>
</reference>
<reference key="4">
    <citation type="journal article" date="1992" name="J. Biol. Chem.">
        <title>Purification and characterization of the mouse mammary tumor virus protease expressed in Escherichia coli.</title>
        <authorList>
            <person name="Menendez-Arias L."/>
            <person name="Young M."/>
            <person name="Oroszlan S."/>
        </authorList>
    </citation>
    <scope>PROTEOLYTIC CLEAVAGE (GAG-PRO-POL POLYPROTEIN)</scope>
    <scope>CHARACTERIZATION (PROTEASE)</scope>
    <scope>SUBUNIT (PROTEASE)</scope>
    <scope>CATALYTIC ACTIVITY (PROTEASE)</scope>
    <scope>ACTIVITY REGULATION (PROTEASE)</scope>
    <scope>BIOPHYSICOCHEMICAL PROPERTIES (PROTEASE)</scope>
    <source>
        <strain>p202</strain>
    </source>
</reference>
<reference key="5">
    <citation type="journal article" date="2016" name="Retrovirology">
        <title>Myristoylation drives dimerization of matrix protein from mouse mammary tumor virus.</title>
        <authorList>
            <person name="Dolezal M."/>
            <person name="Zabransky A."/>
            <person name="Dostal J."/>
            <person name="Vanek O."/>
            <person name="Brynda J."/>
            <person name="Lepsik M."/>
            <person name="Hadravova R."/>
            <person name="Pichova I."/>
        </authorList>
    </citation>
    <scope>SUBUNIT (MATRIX PROTEIN P10)</scope>
</reference>
<reference key="6">
    <citation type="journal article" date="2017" name="Curr. Opin. Struct. Biol.">
        <title>Retroviral intasomes arising.</title>
        <authorList>
            <person name="Engelman A.N."/>
            <person name="Cherepanov P."/>
        </authorList>
    </citation>
    <scope>REVIEW (INTEGRASE)</scope>
</reference>
<reference evidence="21 22 23 24" key="7">
    <citation type="journal article" date="2016" name="Nature">
        <title>Cryo-EM reveals a novel octameric integrase structure for betaretroviral intasome function.</title>
        <authorList>
            <person name="Ballandras-Colas A."/>
            <person name="Brown M."/>
            <person name="Cook N.J."/>
            <person name="Dewdney T.G."/>
            <person name="Demeler B."/>
            <person name="Cherepanov P."/>
            <person name="Lyumkis D."/>
            <person name="Engelman A.N."/>
        </authorList>
    </citation>
    <scope>X-RAY CRYSTALLOGRAPHY (1.50 ANGSTROMS) OF 1645-1702 IN COMPLEX WITH MAGNESIUM AND ZINC</scope>
    <scope>SUBUNIT (INTEGRASE)</scope>
</reference>
<feature type="initiator methionine" description="Removed; by host" evidence="4">
    <location>
        <position position="1"/>
    </location>
</feature>
<feature type="chain" id="PRO_0000125492" description="Gag-Pro-Pol polyprotein">
    <location>
        <begin position="2"/>
        <end position="1755"/>
    </location>
</feature>
<feature type="chain" id="PRO_0000442470" description="Matrix protein p10">
    <location>
        <begin position="2"/>
        <end position="99"/>
    </location>
</feature>
<feature type="chain" id="PRO_0000442471" description="Phosphorylated protein pp21">
    <location>
        <begin position="100"/>
        <end position="195"/>
    </location>
</feature>
<feature type="chain" id="PRO_0000442472" description="Protein p3">
    <location>
        <begin position="196"/>
        <end position="228"/>
    </location>
</feature>
<feature type="chain" id="PRO_0000442473" description="Protein p8">
    <location>
        <begin position="229"/>
        <end position="254"/>
    </location>
</feature>
<feature type="chain" id="PRO_0000442474" description="Protein n">
    <location>
        <begin position="255"/>
        <end position="269"/>
    </location>
</feature>
<feature type="chain" id="PRO_0000442475" description="Capsid protein p27">
    <location>
        <begin position="270"/>
        <end position="496"/>
    </location>
</feature>
<feature type="chain" id="PRO_0000442476" description="Nucleocapsid protein-dUTPase">
    <location>
        <begin position="497"/>
        <end position="745"/>
    </location>
</feature>
<feature type="chain" id="PRO_0000442477" description="Protease">
    <location>
        <begin position="746"/>
        <end position="860"/>
    </location>
</feature>
<feature type="chain" id="PRO_0000434771" description="Reverse transcriptase/ribonuclease H">
    <location>
        <begin position="861"/>
        <end position="1436"/>
    </location>
</feature>
<feature type="chain" id="PRO_0000434772" description="Integrase">
    <location>
        <begin position="1437"/>
        <end position="1755"/>
    </location>
</feature>
<feature type="domain" description="Peptidase A2" evidence="6">
    <location>
        <begin position="766"/>
        <end position="841"/>
    </location>
</feature>
<feature type="domain" description="Reverse transcriptase" evidence="7">
    <location>
        <begin position="905"/>
        <end position="1093"/>
    </location>
</feature>
<feature type="domain" description="RNase H type-1" evidence="8">
    <location>
        <begin position="1307"/>
        <end position="1437"/>
    </location>
</feature>
<feature type="domain" description="Integrase catalytic" evidence="10">
    <location>
        <begin position="1490"/>
        <end position="1647"/>
    </location>
</feature>
<feature type="zinc finger region" description="CCHC-type 1" evidence="5">
    <location>
        <begin position="525"/>
        <end position="542"/>
    </location>
</feature>
<feature type="zinc finger region" description="CCHC-type 2" evidence="5">
    <location>
        <begin position="552"/>
        <end position="569"/>
    </location>
</feature>
<feature type="zinc finger region" description="Integrase-type" evidence="9">
    <location>
        <begin position="1436"/>
        <end position="1477"/>
    </location>
</feature>
<feature type="DNA-binding region" description="Integrase-type" evidence="11">
    <location>
        <begin position="1653"/>
        <end position="1702"/>
    </location>
</feature>
<feature type="region of interest" description="Disordered" evidence="12">
    <location>
        <begin position="151"/>
        <end position="191"/>
    </location>
</feature>
<feature type="region of interest" description="Disordered" evidence="12">
    <location>
        <begin position="572"/>
        <end position="631"/>
    </location>
</feature>
<feature type="region of interest" description="Disordered" evidence="12">
    <location>
        <begin position="1699"/>
        <end position="1755"/>
    </location>
</feature>
<feature type="short sequence motif" description="PTAP/PSAP motif" evidence="19">
    <location>
        <begin position="305"/>
        <end position="308"/>
    </location>
</feature>
<feature type="compositionally biased region" description="Basic and acidic residues" evidence="12">
    <location>
        <begin position="151"/>
        <end position="169"/>
    </location>
</feature>
<feature type="compositionally biased region" description="Basic and acidic residues" evidence="12">
    <location>
        <begin position="178"/>
        <end position="191"/>
    </location>
</feature>
<feature type="compositionally biased region" description="Polar residues" evidence="12">
    <location>
        <begin position="584"/>
        <end position="599"/>
    </location>
</feature>
<feature type="compositionally biased region" description="Basic and acidic residues" evidence="12">
    <location>
        <begin position="1716"/>
        <end position="1740"/>
    </location>
</feature>
<feature type="active site" description="Protease; shared with dimeric partner" evidence="6">
    <location>
        <position position="771"/>
    </location>
</feature>
<feature type="binding site" evidence="7">
    <location>
        <position position="970"/>
    </location>
    <ligand>
        <name>Mg(2+)</name>
        <dbReference type="ChEBI" id="CHEBI:18420"/>
        <label>1</label>
        <note>catalytic; for reverse transcriptase activity</note>
    </ligand>
</feature>
<feature type="binding site" evidence="7">
    <location>
        <position position="1045"/>
    </location>
    <ligand>
        <name>Mg(2+)</name>
        <dbReference type="ChEBI" id="CHEBI:18420"/>
        <label>1</label>
        <note>catalytic; for reverse transcriptase activity</note>
    </ligand>
</feature>
<feature type="binding site" evidence="7">
    <location>
        <position position="1046"/>
    </location>
    <ligand>
        <name>Mg(2+)</name>
        <dbReference type="ChEBI" id="CHEBI:18420"/>
        <label>1</label>
        <note>catalytic; for reverse transcriptase activity</note>
    </ligand>
</feature>
<feature type="binding site" evidence="8">
    <location>
        <position position="1316"/>
    </location>
    <ligand>
        <name>Mg(2+)</name>
        <dbReference type="ChEBI" id="CHEBI:18420"/>
        <label>2</label>
        <note>catalytic; for RNase H activity</note>
    </ligand>
</feature>
<feature type="binding site" evidence="8">
    <location>
        <position position="1346"/>
    </location>
    <ligand>
        <name>Mg(2+)</name>
        <dbReference type="ChEBI" id="CHEBI:18420"/>
        <label>2</label>
        <note>catalytic; for RNase H activity</note>
    </ligand>
</feature>
<feature type="binding site" evidence="8">
    <location>
        <position position="1366"/>
    </location>
    <ligand>
        <name>Mg(2+)</name>
        <dbReference type="ChEBI" id="CHEBI:18420"/>
        <label>2</label>
        <note>catalytic; for RNase H activity</note>
    </ligand>
</feature>
<feature type="binding site" evidence="8">
    <location>
        <position position="1429"/>
    </location>
    <ligand>
        <name>Mg(2+)</name>
        <dbReference type="ChEBI" id="CHEBI:18420"/>
        <label>2</label>
        <note>catalytic; for RNase H activity</note>
    </ligand>
</feature>
<feature type="binding site" evidence="9">
    <location>
        <position position="1445"/>
    </location>
    <ligand>
        <name>Zn(2+)</name>
        <dbReference type="ChEBI" id="CHEBI:29105"/>
    </ligand>
</feature>
<feature type="binding site" evidence="9">
    <location>
        <position position="1449"/>
    </location>
    <ligand>
        <name>Zn(2+)</name>
        <dbReference type="ChEBI" id="CHEBI:29105"/>
    </ligand>
</feature>
<feature type="binding site" evidence="9">
    <location>
        <position position="1473"/>
    </location>
    <ligand>
        <name>Zn(2+)</name>
        <dbReference type="ChEBI" id="CHEBI:29105"/>
    </ligand>
</feature>
<feature type="binding site" evidence="9">
    <location>
        <position position="1476"/>
    </location>
    <ligand>
        <name>Zn(2+)</name>
        <dbReference type="ChEBI" id="CHEBI:29105"/>
    </ligand>
</feature>
<feature type="binding site" evidence="10">
    <location>
        <position position="1501"/>
    </location>
    <ligand>
        <name>Mg(2+)</name>
        <dbReference type="ChEBI" id="CHEBI:18420"/>
        <label>3</label>
        <note>catalytic; for integrase activity</note>
    </ligand>
</feature>
<feature type="binding site" evidence="10">
    <location>
        <position position="1558"/>
    </location>
    <ligand>
        <name>Mg(2+)</name>
        <dbReference type="ChEBI" id="CHEBI:18420"/>
        <label>3</label>
        <note>catalytic; for integrase activity</note>
    </ligand>
</feature>
<feature type="binding site" evidence="1">
    <location>
        <position position="1594"/>
    </location>
    <ligand>
        <name>Mg(2+)</name>
        <dbReference type="ChEBI" id="CHEBI:18420"/>
        <label>3</label>
        <note>catalytic; for integrase activity</note>
    </ligand>
</feature>
<feature type="site" description="Cleavage; by viral protease" evidence="13">
    <location>
        <begin position="99"/>
        <end position="100"/>
    </location>
</feature>
<feature type="site" description="Cleavage; by viral protease" evidence="13">
    <location>
        <begin position="195"/>
        <end position="196"/>
    </location>
</feature>
<feature type="site" description="Cleavage; by viral protease" evidence="13">
    <location>
        <begin position="228"/>
        <end position="229"/>
    </location>
</feature>
<feature type="site" description="Cleavage; by viral protease" evidence="13">
    <location>
        <begin position="254"/>
        <end position="255"/>
    </location>
</feature>
<feature type="site" description="Cleavage; by viral protease" evidence="13">
    <location>
        <begin position="269"/>
        <end position="270"/>
    </location>
</feature>
<feature type="site" description="Cleavage; by viral protease" evidence="13">
    <location>
        <begin position="496"/>
        <end position="497"/>
    </location>
</feature>
<feature type="site" description="Cleavage; by viral protease" evidence="13">
    <location>
        <begin position="745"/>
        <end position="746"/>
    </location>
</feature>
<feature type="site" description="Cleavage; by viral protease" evidence="20">
    <location>
        <begin position="1436"/>
        <end position="1437"/>
    </location>
</feature>
<feature type="lipid moiety-binding region" description="N-myristoyl glycine; by host" evidence="3">
    <location>
        <position position="2"/>
    </location>
</feature>
<feature type="sequence conflict" description="In Ref. 2; AAA46540." evidence="19" ref="2">
    <original>H</original>
    <variation>S</variation>
    <location>
        <position position="1481"/>
    </location>
</feature>
<feature type="helix" evidence="26">
    <location>
        <begin position="1438"/>
        <end position="1448"/>
    </location>
</feature>
<feature type="helix" evidence="26">
    <location>
        <begin position="1452"/>
        <end position="1459"/>
    </location>
</feature>
<feature type="helix" evidence="26">
    <location>
        <begin position="1463"/>
        <end position="1472"/>
    </location>
</feature>
<feature type="strand" evidence="25">
    <location>
        <begin position="1495"/>
        <end position="1504"/>
    </location>
</feature>
<feature type="helix" evidence="25">
    <location>
        <begin position="1506"/>
        <end position="1511"/>
    </location>
</feature>
<feature type="strand" evidence="25">
    <location>
        <begin position="1513"/>
        <end position="1519"/>
    </location>
</feature>
<feature type="turn" evidence="25">
    <location>
        <begin position="1520"/>
        <end position="1522"/>
    </location>
</feature>
<feature type="strand" evidence="25">
    <location>
        <begin position="1525"/>
        <end position="1531"/>
    </location>
</feature>
<feature type="helix" evidence="25">
    <location>
        <begin position="1535"/>
        <end position="1549"/>
    </location>
</feature>
<feature type="strand" evidence="25">
    <location>
        <begin position="1552"/>
        <end position="1556"/>
    </location>
</feature>
<feature type="helix" evidence="25">
    <location>
        <begin position="1561"/>
        <end position="1564"/>
    </location>
</feature>
<feature type="helix" evidence="25">
    <location>
        <begin position="1566"/>
        <end position="1573"/>
    </location>
</feature>
<feature type="turn" evidence="25">
    <location>
        <begin position="1574"/>
        <end position="1576"/>
    </location>
</feature>
<feature type="strand" evidence="25">
    <location>
        <begin position="1578"/>
        <end position="1580"/>
    </location>
</feature>
<feature type="helix" evidence="25">
    <location>
        <begin position="1587"/>
        <end position="1589"/>
    </location>
</feature>
<feature type="helix" evidence="25">
    <location>
        <begin position="1591"/>
        <end position="1605"/>
    </location>
</feature>
<feature type="turn" evidence="25">
    <location>
        <begin position="1606"/>
        <end position="1609"/>
    </location>
</feature>
<feature type="helix" evidence="25">
    <location>
        <begin position="1610"/>
        <end position="1612"/>
    </location>
</feature>
<feature type="helix" evidence="25">
    <location>
        <begin position="1616"/>
        <end position="1629"/>
    </location>
</feature>
<feature type="helix" evidence="25">
    <location>
        <begin position="1639"/>
        <end position="1644"/>
    </location>
</feature>
<feature type="strand" evidence="27">
    <location>
        <begin position="1654"/>
        <end position="1658"/>
    </location>
</feature>
<feature type="turn" evidence="27">
    <location>
        <begin position="1660"/>
        <end position="1662"/>
    </location>
</feature>
<feature type="strand" evidence="27">
    <location>
        <begin position="1665"/>
        <end position="1675"/>
    </location>
</feature>
<feature type="strand" evidence="27">
    <location>
        <begin position="1678"/>
        <end position="1681"/>
    </location>
</feature>
<feature type="strand" evidence="27">
    <location>
        <begin position="1690"/>
        <end position="1693"/>
    </location>
</feature>
<feature type="helix" evidence="27">
    <location>
        <begin position="1694"/>
        <end position="1696"/>
    </location>
</feature>
<feature type="strand" evidence="27">
    <location>
        <begin position="1697"/>
        <end position="1700"/>
    </location>
</feature>
<dbReference type="EC" id="3.6.1.23" evidence="3"/>
<dbReference type="EC" id="3.4.23.-" evidence="6 13"/>
<dbReference type="EC" id="2.7.7.49" evidence="7"/>
<dbReference type="EC" id="2.7.7.7" evidence="7"/>
<dbReference type="EC" id="3.1.26.4" evidence="8"/>
<dbReference type="EC" id="2.7.7.-" evidence="3"/>
<dbReference type="EC" id="3.1.-.-" evidence="3"/>
<dbReference type="EMBL" id="M15122">
    <property type="protein sequence ID" value="AAA46542.1"/>
    <property type="molecule type" value="Genomic_RNA"/>
</dbReference>
<dbReference type="EMBL" id="K01707">
    <property type="protein sequence ID" value="AAA46540.1"/>
    <property type="molecule type" value="Genomic_RNA"/>
</dbReference>
<dbReference type="PIR" id="A05073">
    <property type="entry name" value="A05073"/>
</dbReference>
<dbReference type="PIR" id="C26795">
    <property type="entry name" value="GNMVMM"/>
</dbReference>
<dbReference type="PDB" id="3JCA">
    <property type="method" value="EM"/>
    <property type="resolution" value="4.80 A"/>
    <property type="chains" value="A/B/E/F=1437-1701, C/D/G/H=1653-1701"/>
</dbReference>
<dbReference type="PDB" id="5CZ1">
    <property type="method" value="X-ray"/>
    <property type="resolution" value="1.70 A"/>
    <property type="chains" value="A/B/C/D=1487-1648"/>
</dbReference>
<dbReference type="PDB" id="5CZ2">
    <property type="method" value="X-ray"/>
    <property type="resolution" value="2.72 A"/>
    <property type="chains" value="A/B/C/D/E/F/G/H/I/J/K/L=1437-1646"/>
</dbReference>
<dbReference type="PDB" id="5D7U">
    <property type="method" value="X-ray"/>
    <property type="resolution" value="1.50 A"/>
    <property type="chains" value="A/B=1648-1702"/>
</dbReference>
<dbReference type="PDB" id="7USF">
    <property type="method" value="EM"/>
    <property type="resolution" value="3.50 A"/>
    <property type="chains" value="A/B/C/D=1437-1755"/>
</dbReference>
<dbReference type="PDB" id="7UT1">
    <property type="method" value="EM"/>
    <property type="resolution" value="3.80 A"/>
    <property type="chains" value="A/B/C/D/E/F/G/H/a/b/c/d/e/f/g/h=1437-1755"/>
</dbReference>
<dbReference type="PDBsum" id="3JCA"/>
<dbReference type="PDBsum" id="5CZ1"/>
<dbReference type="PDBsum" id="5CZ2"/>
<dbReference type="PDBsum" id="5D7U"/>
<dbReference type="PDBsum" id="7USF"/>
<dbReference type="PDBsum" id="7UT1"/>
<dbReference type="SMR" id="P03365"/>
<dbReference type="MEROPS" id="A02.010"/>
<dbReference type="EvolutionaryTrace" id="P03365"/>
<dbReference type="Proteomes" id="UP000228400">
    <property type="component" value="Genome"/>
</dbReference>
<dbReference type="GO" id="GO:0019013">
    <property type="term" value="C:viral nucleocapsid"/>
    <property type="evidence" value="ECO:0007669"/>
    <property type="project" value="UniProtKB-KW"/>
</dbReference>
<dbReference type="GO" id="GO:0004190">
    <property type="term" value="F:aspartic-type endopeptidase activity"/>
    <property type="evidence" value="ECO:0007669"/>
    <property type="project" value="UniProtKB-KW"/>
</dbReference>
<dbReference type="GO" id="GO:0003677">
    <property type="term" value="F:DNA binding"/>
    <property type="evidence" value="ECO:0007669"/>
    <property type="project" value="UniProtKB-KW"/>
</dbReference>
<dbReference type="GO" id="GO:0003887">
    <property type="term" value="F:DNA-directed DNA polymerase activity"/>
    <property type="evidence" value="ECO:0007669"/>
    <property type="project" value="UniProtKB-KW"/>
</dbReference>
<dbReference type="GO" id="GO:0004170">
    <property type="term" value="F:dUTP diphosphatase activity"/>
    <property type="evidence" value="ECO:0007669"/>
    <property type="project" value="UniProtKB-EC"/>
</dbReference>
<dbReference type="GO" id="GO:0035613">
    <property type="term" value="F:RNA stem-loop binding"/>
    <property type="evidence" value="ECO:0007669"/>
    <property type="project" value="TreeGrafter"/>
</dbReference>
<dbReference type="GO" id="GO:0003964">
    <property type="term" value="F:RNA-directed DNA polymerase activity"/>
    <property type="evidence" value="ECO:0007669"/>
    <property type="project" value="UniProtKB-KW"/>
</dbReference>
<dbReference type="GO" id="GO:0004523">
    <property type="term" value="F:RNA-DNA hybrid ribonuclease activity"/>
    <property type="evidence" value="ECO:0007669"/>
    <property type="project" value="UniProtKB-EC"/>
</dbReference>
<dbReference type="GO" id="GO:0039660">
    <property type="term" value="F:structural constituent of virion"/>
    <property type="evidence" value="ECO:0007669"/>
    <property type="project" value="UniProtKB-KW"/>
</dbReference>
<dbReference type="GO" id="GO:0008270">
    <property type="term" value="F:zinc ion binding"/>
    <property type="evidence" value="ECO:0007669"/>
    <property type="project" value="UniProtKB-KW"/>
</dbReference>
<dbReference type="GO" id="GO:0015074">
    <property type="term" value="P:DNA integration"/>
    <property type="evidence" value="ECO:0007669"/>
    <property type="project" value="UniProtKB-KW"/>
</dbReference>
<dbReference type="GO" id="GO:0006310">
    <property type="term" value="P:DNA recombination"/>
    <property type="evidence" value="ECO:0007669"/>
    <property type="project" value="UniProtKB-KW"/>
</dbReference>
<dbReference type="GO" id="GO:0075713">
    <property type="term" value="P:establishment of integrated proviral latency"/>
    <property type="evidence" value="ECO:0007669"/>
    <property type="project" value="UniProtKB-KW"/>
</dbReference>
<dbReference type="GO" id="GO:0006508">
    <property type="term" value="P:proteolysis"/>
    <property type="evidence" value="ECO:0007669"/>
    <property type="project" value="UniProtKB-KW"/>
</dbReference>
<dbReference type="GO" id="GO:0046718">
    <property type="term" value="P:symbiont entry into host cell"/>
    <property type="evidence" value="ECO:0007669"/>
    <property type="project" value="UniProtKB-KW"/>
</dbReference>
<dbReference type="GO" id="GO:0044826">
    <property type="term" value="P:viral genome integration into host DNA"/>
    <property type="evidence" value="ECO:0007669"/>
    <property type="project" value="UniProtKB-KW"/>
</dbReference>
<dbReference type="GO" id="GO:0075523">
    <property type="term" value="P:viral translational frameshifting"/>
    <property type="evidence" value="ECO:0007669"/>
    <property type="project" value="UniProtKB-KW"/>
</dbReference>
<dbReference type="CDD" id="cd05482">
    <property type="entry name" value="HIV_retropepsin_like"/>
    <property type="match status" value="1"/>
</dbReference>
<dbReference type="CDD" id="cd01645">
    <property type="entry name" value="RT_Rtv"/>
    <property type="match status" value="1"/>
</dbReference>
<dbReference type="CDD" id="cd07557">
    <property type="entry name" value="trimeric_dUTPase"/>
    <property type="match status" value="1"/>
</dbReference>
<dbReference type="FunFam" id="1.10.150.490:FF:000001">
    <property type="entry name" value="Gag polyprotein"/>
    <property type="match status" value="1"/>
</dbReference>
<dbReference type="FunFam" id="1.10.375.10:FF:000007">
    <property type="entry name" value="Gag polyprotein"/>
    <property type="match status" value="1"/>
</dbReference>
<dbReference type="FunFam" id="4.10.60.10:FF:000036">
    <property type="entry name" value="Gag polyprotein"/>
    <property type="match status" value="1"/>
</dbReference>
<dbReference type="FunFam" id="2.40.70.10:FF:000150">
    <property type="entry name" value="Gag-Pro polyprotein"/>
    <property type="match status" value="1"/>
</dbReference>
<dbReference type="Gene3D" id="1.10.10.200">
    <property type="match status" value="1"/>
</dbReference>
<dbReference type="Gene3D" id="1.10.1200.30">
    <property type="match status" value="1"/>
</dbReference>
<dbReference type="Gene3D" id="2.70.40.10">
    <property type="match status" value="1"/>
</dbReference>
<dbReference type="Gene3D" id="3.30.70.270">
    <property type="match status" value="2"/>
</dbReference>
<dbReference type="Gene3D" id="2.40.70.10">
    <property type="entry name" value="Acid Proteases"/>
    <property type="match status" value="1"/>
</dbReference>
<dbReference type="Gene3D" id="3.10.10.10">
    <property type="entry name" value="HIV Type 1 Reverse Transcriptase, subunit A, domain 1"/>
    <property type="match status" value="1"/>
</dbReference>
<dbReference type="Gene3D" id="1.10.375.10">
    <property type="entry name" value="Human Immunodeficiency Virus Type 1 Capsid Protein"/>
    <property type="match status" value="1"/>
</dbReference>
<dbReference type="Gene3D" id="2.30.30.10">
    <property type="entry name" value="Integrase, C-terminal domain superfamily, retroviral"/>
    <property type="match status" value="1"/>
</dbReference>
<dbReference type="Gene3D" id="1.10.150.490">
    <property type="entry name" value="Retroviral GAG p10 protein"/>
    <property type="match status" value="1"/>
</dbReference>
<dbReference type="Gene3D" id="3.30.420.10">
    <property type="entry name" value="Ribonuclease H-like superfamily/Ribonuclease H"/>
    <property type="match status" value="2"/>
</dbReference>
<dbReference type="Gene3D" id="4.10.60.10">
    <property type="entry name" value="Zinc finger, CCHC-type"/>
    <property type="match status" value="1"/>
</dbReference>
<dbReference type="InterPro" id="IPR001969">
    <property type="entry name" value="Aspartic_peptidase_AS"/>
</dbReference>
<dbReference type="InterPro" id="IPR003322">
    <property type="entry name" value="B_retro_matrix"/>
</dbReference>
<dbReference type="InterPro" id="IPR038124">
    <property type="entry name" value="B_retro_matrix_sf"/>
</dbReference>
<dbReference type="InterPro" id="IPR043502">
    <property type="entry name" value="DNA/RNA_pol_sf"/>
</dbReference>
<dbReference type="InterPro" id="IPR029054">
    <property type="entry name" value="dUTPase-like"/>
</dbReference>
<dbReference type="InterPro" id="IPR036157">
    <property type="entry name" value="dUTPase-like_sf"/>
</dbReference>
<dbReference type="InterPro" id="IPR033704">
    <property type="entry name" value="dUTPase_trimeric"/>
</dbReference>
<dbReference type="InterPro" id="IPR045345">
    <property type="entry name" value="Gag_p24_C"/>
</dbReference>
<dbReference type="InterPro" id="IPR017856">
    <property type="entry name" value="Integrase-like_N"/>
</dbReference>
<dbReference type="InterPro" id="IPR036862">
    <property type="entry name" value="Integrase_C_dom_sf_retrovir"/>
</dbReference>
<dbReference type="InterPro" id="IPR001037">
    <property type="entry name" value="Integrase_C_retrovir"/>
</dbReference>
<dbReference type="InterPro" id="IPR001584">
    <property type="entry name" value="Integrase_cat-core"/>
</dbReference>
<dbReference type="InterPro" id="IPR003308">
    <property type="entry name" value="Integrase_Zn-bd_dom_N"/>
</dbReference>
<dbReference type="InterPro" id="IPR001995">
    <property type="entry name" value="Peptidase_A2_cat"/>
</dbReference>
<dbReference type="InterPro" id="IPR021109">
    <property type="entry name" value="Peptidase_aspartic_dom_sf"/>
</dbReference>
<dbReference type="InterPro" id="IPR034170">
    <property type="entry name" value="Retropepsin-like_cat_dom"/>
</dbReference>
<dbReference type="InterPro" id="IPR018061">
    <property type="entry name" value="Retropepsins"/>
</dbReference>
<dbReference type="InterPro" id="IPR008916">
    <property type="entry name" value="Retrov_capsid_C"/>
</dbReference>
<dbReference type="InterPro" id="IPR008919">
    <property type="entry name" value="Retrov_capsid_N"/>
</dbReference>
<dbReference type="InterPro" id="IPR010999">
    <property type="entry name" value="Retrovr_matrix"/>
</dbReference>
<dbReference type="InterPro" id="IPR043128">
    <property type="entry name" value="Rev_trsase/Diguanyl_cyclase"/>
</dbReference>
<dbReference type="InterPro" id="IPR012337">
    <property type="entry name" value="RNaseH-like_sf"/>
</dbReference>
<dbReference type="InterPro" id="IPR002156">
    <property type="entry name" value="RNaseH_domain"/>
</dbReference>
<dbReference type="InterPro" id="IPR036397">
    <property type="entry name" value="RNaseH_sf"/>
</dbReference>
<dbReference type="InterPro" id="IPR000477">
    <property type="entry name" value="RT_dom"/>
</dbReference>
<dbReference type="InterPro" id="IPR010661">
    <property type="entry name" value="RVT_thumb"/>
</dbReference>
<dbReference type="InterPro" id="IPR001878">
    <property type="entry name" value="Znf_CCHC"/>
</dbReference>
<dbReference type="InterPro" id="IPR036875">
    <property type="entry name" value="Znf_CCHC_sf"/>
</dbReference>
<dbReference type="PANTHER" id="PTHR41694">
    <property type="entry name" value="ENDOGENOUS RETROVIRUS GROUP K MEMBER POL PROTEIN"/>
    <property type="match status" value="1"/>
</dbReference>
<dbReference type="PANTHER" id="PTHR41694:SF3">
    <property type="entry name" value="RNA-DIRECTED DNA POLYMERASE-RELATED"/>
    <property type="match status" value="1"/>
</dbReference>
<dbReference type="Pfam" id="PF00692">
    <property type="entry name" value="dUTPase"/>
    <property type="match status" value="1"/>
</dbReference>
<dbReference type="Pfam" id="PF02337">
    <property type="entry name" value="Gag_p10"/>
    <property type="match status" value="1"/>
</dbReference>
<dbReference type="Pfam" id="PF00607">
    <property type="entry name" value="Gag_p24"/>
    <property type="match status" value="1"/>
</dbReference>
<dbReference type="Pfam" id="PF19317">
    <property type="entry name" value="Gag_p24_C"/>
    <property type="match status" value="1"/>
</dbReference>
<dbReference type="Pfam" id="PF00552">
    <property type="entry name" value="IN_DBD_C"/>
    <property type="match status" value="1"/>
</dbReference>
<dbReference type="Pfam" id="PF02022">
    <property type="entry name" value="Integrase_Zn"/>
    <property type="match status" value="1"/>
</dbReference>
<dbReference type="Pfam" id="PF00075">
    <property type="entry name" value="RNase_H"/>
    <property type="match status" value="1"/>
</dbReference>
<dbReference type="Pfam" id="PF00665">
    <property type="entry name" value="rve"/>
    <property type="match status" value="1"/>
</dbReference>
<dbReference type="Pfam" id="PF00077">
    <property type="entry name" value="RVP"/>
    <property type="match status" value="1"/>
</dbReference>
<dbReference type="Pfam" id="PF00078">
    <property type="entry name" value="RVT_1"/>
    <property type="match status" value="1"/>
</dbReference>
<dbReference type="Pfam" id="PF06817">
    <property type="entry name" value="RVT_thumb"/>
    <property type="match status" value="1"/>
</dbReference>
<dbReference type="Pfam" id="PF00098">
    <property type="entry name" value="zf-CCHC"/>
    <property type="match status" value="1"/>
</dbReference>
<dbReference type="Pfam" id="PF14787">
    <property type="entry name" value="zf-CCHC_5"/>
    <property type="match status" value="1"/>
</dbReference>
<dbReference type="SMART" id="SM00343">
    <property type="entry name" value="ZnF_C2HC"/>
    <property type="match status" value="2"/>
</dbReference>
<dbReference type="SUPFAM" id="SSF50630">
    <property type="entry name" value="Acid proteases"/>
    <property type="match status" value="1"/>
</dbReference>
<dbReference type="SUPFAM" id="SSF50122">
    <property type="entry name" value="DNA-binding domain of retroviral integrase"/>
    <property type="match status" value="1"/>
</dbReference>
<dbReference type="SUPFAM" id="SSF56672">
    <property type="entry name" value="DNA/RNA polymerases"/>
    <property type="match status" value="1"/>
</dbReference>
<dbReference type="SUPFAM" id="SSF51283">
    <property type="entry name" value="dUTPase-like"/>
    <property type="match status" value="1"/>
</dbReference>
<dbReference type="SUPFAM" id="SSF46919">
    <property type="entry name" value="N-terminal Zn binding domain of HIV integrase"/>
    <property type="match status" value="1"/>
</dbReference>
<dbReference type="SUPFAM" id="SSF47836">
    <property type="entry name" value="Retroviral matrix proteins"/>
    <property type="match status" value="1"/>
</dbReference>
<dbReference type="SUPFAM" id="SSF47353">
    <property type="entry name" value="Retrovirus capsid dimerization domain-like"/>
    <property type="match status" value="1"/>
</dbReference>
<dbReference type="SUPFAM" id="SSF47943">
    <property type="entry name" value="Retrovirus capsid protein, N-terminal core domain"/>
    <property type="match status" value="1"/>
</dbReference>
<dbReference type="SUPFAM" id="SSF57756">
    <property type="entry name" value="Retrovirus zinc finger-like domains"/>
    <property type="match status" value="2"/>
</dbReference>
<dbReference type="SUPFAM" id="SSF53098">
    <property type="entry name" value="Ribonuclease H-like"/>
    <property type="match status" value="2"/>
</dbReference>
<dbReference type="PROSITE" id="PS50175">
    <property type="entry name" value="ASP_PROT_RETROV"/>
    <property type="match status" value="1"/>
</dbReference>
<dbReference type="PROSITE" id="PS00141">
    <property type="entry name" value="ASP_PROTEASE"/>
    <property type="match status" value="1"/>
</dbReference>
<dbReference type="PROSITE" id="PS50994">
    <property type="entry name" value="INTEGRASE"/>
    <property type="match status" value="1"/>
</dbReference>
<dbReference type="PROSITE" id="PS51027">
    <property type="entry name" value="INTEGRASE_DBD"/>
    <property type="match status" value="1"/>
</dbReference>
<dbReference type="PROSITE" id="PS50879">
    <property type="entry name" value="RNASE_H_1"/>
    <property type="match status" value="1"/>
</dbReference>
<dbReference type="PROSITE" id="PS50878">
    <property type="entry name" value="RT_POL"/>
    <property type="match status" value="1"/>
</dbReference>
<dbReference type="PROSITE" id="PS50158">
    <property type="entry name" value="ZF_CCHC"/>
    <property type="match status" value="1"/>
</dbReference>
<dbReference type="PROSITE" id="PS50876">
    <property type="entry name" value="ZF_INTEGRASE"/>
    <property type="match status" value="1"/>
</dbReference>
<proteinExistence type="evidence at protein level"/>
<organismHost>
    <name type="scientific">Mus musculus</name>
    <name type="common">Mouse</name>
    <dbReference type="NCBI Taxonomy" id="10090"/>
</organismHost>
<name>POL_MMTVB</name>
<accession>P03365</accession>
<organism>
    <name type="scientific">Mouse mammary tumor virus (strain BR6)</name>
    <name type="common">MMTV</name>
    <dbReference type="NCBI Taxonomy" id="11758"/>
    <lineage>
        <taxon>Viruses</taxon>
        <taxon>Riboviria</taxon>
        <taxon>Pararnavirae</taxon>
        <taxon>Artverviricota</taxon>
        <taxon>Revtraviricetes</taxon>
        <taxon>Ortervirales</taxon>
        <taxon>Retroviridae</taxon>
        <taxon>Orthoretrovirinae</taxon>
        <taxon>Betaretrovirus</taxon>
        <taxon>Mouse mammary tumor virus</taxon>
    </lineage>
</organism>
<protein>
    <recommendedName>
        <fullName>Gag-Pro-Pol polyprotein</fullName>
    </recommendedName>
    <component>
        <recommendedName>
            <fullName>Matrix protein p10</fullName>
        </recommendedName>
    </component>
    <component>
        <recommendedName>
            <fullName>Phosphorylated protein pp21</fullName>
        </recommendedName>
    </component>
    <component>
        <recommendedName>
            <fullName>Protein p3</fullName>
        </recommendedName>
    </component>
    <component>
        <recommendedName>
            <fullName>Protein p8</fullName>
        </recommendedName>
    </component>
    <component>
        <recommendedName>
            <fullName>Protein n</fullName>
        </recommendedName>
    </component>
    <component>
        <recommendedName>
            <fullName>Capsid protein p27</fullName>
        </recommendedName>
    </component>
    <component>
        <recommendedName>
            <fullName>Nucleocapsid protein-dUTPase</fullName>
            <shortName>NC-dUTPase</shortName>
            <ecNumber evidence="3">3.6.1.23</ecNumber>
        </recommendedName>
    </component>
    <component>
        <recommendedName>
            <fullName>Protease</fullName>
            <ecNumber evidence="6 13">3.4.23.-</ecNumber>
        </recommendedName>
    </component>
    <component>
        <recommendedName>
            <fullName>Reverse transcriptase/ribonuclease H</fullName>
            <shortName>RT</shortName>
            <ecNumber evidence="7">2.7.7.49</ecNumber>
            <ecNumber evidence="7">2.7.7.7</ecNumber>
            <ecNumber evidence="8">3.1.26.4</ecNumber>
        </recommendedName>
    </component>
    <component>
        <recommendedName>
            <fullName>Integrase</fullName>
            <shortName>IN</shortName>
            <ecNumber evidence="3">2.7.7.-</ecNumber>
            <ecNumber evidence="3">3.1.-.-</ecNumber>
        </recommendedName>
    </component>
</protein>
<keyword id="KW-0002">3D-structure</keyword>
<keyword id="KW-0064">Aspartyl protease</keyword>
<keyword id="KW-0167">Capsid protein</keyword>
<keyword id="KW-0229">DNA integration</keyword>
<keyword id="KW-0233">DNA recombination</keyword>
<keyword id="KW-0238">DNA-binding</keyword>
<keyword id="KW-0239">DNA-directed DNA polymerase</keyword>
<keyword id="KW-0255">Endonuclease</keyword>
<keyword id="KW-0378">Hydrolase</keyword>
<keyword id="KW-0449">Lipoprotein</keyword>
<keyword id="KW-0460">Magnesium</keyword>
<keyword id="KW-0479">Metal-binding</keyword>
<keyword id="KW-0511">Multifunctional enzyme</keyword>
<keyword id="KW-0519">Myristate</keyword>
<keyword id="KW-0540">Nuclease</keyword>
<keyword id="KW-0548">Nucleotidyltransferase</keyword>
<keyword id="KW-0645">Protease</keyword>
<keyword id="KW-1185">Reference proteome</keyword>
<keyword id="KW-0677">Repeat</keyword>
<keyword id="KW-0688">Ribosomal frameshifting</keyword>
<keyword id="KW-0694">RNA-binding</keyword>
<keyword id="KW-0695">RNA-directed DNA polymerase</keyword>
<keyword id="KW-0808">Transferase</keyword>
<keyword id="KW-1179">Viral genome integration</keyword>
<keyword id="KW-0468">Viral matrix protein</keyword>
<keyword id="KW-0543">Viral nucleoprotein</keyword>
<keyword id="KW-0946">Virion</keyword>
<keyword id="KW-1160">Virus entry into host cell</keyword>
<keyword id="KW-0862">Zinc</keyword>
<keyword id="KW-0863">Zinc-finger</keyword>
<sequence length="1755" mass="197115">MGVSGSKGQKLFVSVLQRLLSERGLHVKESSAIEFYQFLIKVSPWFPEEGGLNLQDWKRVGREMKRYAAEHGTDSIPKQAYPIWLQLREILTEQSDLVLLSAEAKSVTEEELEEGLTGLLSTSSQEKTYGTRGTAYAEIDTEVDKLSEHIYDEPYEEKEKADKNEEKDHVRKIKKVVQRKENSEGKRKEKDSKAFLATDWNDDDLSPEDWDDLEEQAAHYHDDDELILPVKRKVVKKKPQALRRKPLPPVGFAGAMAEAREKGDLTFTFPVVFMGESDEDDTPVWEPLPLKTLKELQSAVRTMGPSAPYTLQVVDMVASQWLTPSDWHQTARATLSPGDYVLWRTEYEEKSKEMVQKAAGKRKGKVSLDMLLGTGQFLSPSSQIKLSKDVLKDVTTNAVLAWRAIPPPGVKKTVLAGLKQGNEESYETFISRLEEAVYRMMPRGEGSDILIKQLAWENANSLCQDLIRPIRKTGTIQDYIRACLDASPAVVQGMAYAAAMRGQKYSTFVKQTYGGGKGGQGAEGPVCFSCGKTGHIRKDCKDEKGSKRAPPGLCPRCKKGYHWKSECKSKFDKDGNPLPPLETNAENSKNLVKGQSPSPAQKGDGVKGSGLNPEAPPFTIHDLPRGTPGSAGLDLSSQKDLILSLEDGVSLVPTLVKGTLPEGTTGLIIGRSSNYKKGLEVLPGVIDSDFQGEIKVMVKAAKNAVIIHKGERIAQLLLLPYLKLPNPVIKEERGSEGFGSTSHVHWVQEISDSRPMLHIYLNGRRFLGLLDTGADKTCIAGRDWPANWPIHQTESSLQGLGMACGVARSSQPLRWQHEDKSGIIHPFVIPTLPFTLWGRDIMKDIKVRLMTDSPDDSQDLMIGAIESNLFADQISWKSDQPVWLNQWPLKQEKLQALQQLVTEQLQLGHLEESNSPWNTPVFVIKKKSGKWRLLQDLRAVNATMHDMGALQPGLPSPVAVPKGWEIIIIDLQDCFFNIKLHPEDCKRFAFSVPSPNFKRPYQRFQWKVLPQGMKNSPTLCQKFVDKAILTVRDKYQDSYIVHYMDDILLAHPSRSIVDEILTSMIQALNKHGLVVSTEKIQKYDNLKYLGTHIQGDSVSYQKLQIRTDKLRTLNDFQKLLGNINWIRPFLKLTTGELKPLFEILNGDSNPISTRKLTPEACKALQLMNERLSTARVKRLDLSQPWSLCILKTEYTPTACLWQDGVVEWIHLPHISPKVITPYDIFCTQLIIKGRHRSKELFSKDPDYIVVPYTKVQFDLLLQEKEDWPISLLGFLGEVHFHLPKDPLLTFTLQTAIIFPHMTSTTPLEKGIVIFTDGSANGRSVTYIQGREPIIKENTQNTAQQAEIVAVITAFEEVSQPFNLYTDSKYVTGLFPEIETATLSPRTKIYTELKHLQRLIHKRQEKFYIGHIRGHTGLPGPLAQGNAYADSLTRILTALESAQESHALHHQNAAALRFQFHITREQAREIVKLCPNCPDWGHAPQLGVNPRGLKPRVLWQMDVTHVSEFGKLKYVHVTVDTYSHFTFATARTGEATKDVLQHLAQSFAYMGIPQKIKTDNAPAYVSRSIQEFLARWKISHVTGIPYNPQGQAIVERTHQNIKAQLNKLQKAGKYYTPHHLLAHALFVLNHVNMDNQGHTAAERHWGPISADPKPMVMWKDLLTGSWKGPDVLITAGRGYACVFPQDAETPIWVPDRFIRPFTERKEATPTPGTAEKTPPRDEKDQQESPKNESSPHQREDGLATSAGVDLRSGGGP</sequence>
<comment type="function">
    <molecule>Matrix protein p10</molecule>
    <text evidence="19">Matrix protein.</text>
</comment>
<comment type="function">
    <text evidence="19">Nucleocapsid protein p14: Binds strongly to viral nucleic acids and promote their aggregation. Also destabilizes the nucleic acids duplexes via highly structured zinc-binding motifs.</text>
</comment>
<comment type="function">
    <molecule>Capsid protein p27</molecule>
    <text evidence="19">Capsid protein.</text>
</comment>
<comment type="function">
    <text evidence="3">NC-dUTPase has dUTPase activity, thereby preventing incorporation of uracil into DNA.</text>
</comment>
<comment type="function">
    <molecule>Protease</molecule>
    <text evidence="6">The aspartyl protease mediates proteolytic cleavages of Gag and Gag-Pol polyproteins during or shortly after the release of the virion from the plasma membrane. Cleavages take place as an ordered, step-wise cascade to yield mature proteins. This process is called maturation. Displays maximal activity during the budding process just prior to particle release from the cell.</text>
</comment>
<comment type="function">
    <molecule>Reverse transcriptase/ribonuclease H</molecule>
    <text evidence="7">RT is a multifunctional enzyme that converts the viral dimeric RNA genome into dsDNA in the cytoplasm, shortly after virus entry into the cell. This enzyme displays a DNA polymerase activity that can copy either DNA or RNA templates, and a ribonuclease H (RNase H) activity that cleaves the RNA strand of RNA-DNA heteroduplexes in a partially processive 3' to 5' endonucleasic mode. Conversion of viral genomic RNA into dsDNA requires many steps. A tRNA binds to the primer-binding site (PBS) situated at the 5' end of the viral RNA. RT uses the 3' end of the tRNA primer to perfom a short round of RNA-dependent minus-strand DNA synthesis. The reading proceeds through the U5 region and ends after the repeated (R) region which is present at both ends of viral RNA. The portion of the RNA-DNA heteroduplex is digested by the RNase H, resulting in a ssDNA product attached to the tRNA primer. This ssDNA/tRNA hybridizes with the identical R region situated at the 3' end of viral RNA. This template exchange, known as minus-strand DNA strong stop transfer, can be either intra- or intermolecular. RT uses the 3' end of this newly synthesized short ssDNA to perfom the RNA-dependent minus-strand DNA synthesis of the whole template. RNase H digests the RNA template except for a polypurine tract (PPT) situated at the 5' end of the genome. It is not clear if both polymerase and RNase H activities are simultaneous. RNase H probably can proceed both in a polymerase-dependent (RNA cut into small fragments by the same RT performing DNA synthesis) and a polymerase-independent mode (cleavage of remaining RNA fragments by free RTs). Secondly, RT performs DNA-directed plus-strand DNA synthesis using the PPT that has not been removed by RNase H as primers. PPT and tRNA primers are then removed by RNase H. The 3' and 5' ssDNA PBS regions hybridize to form a circular dsDNA intermediate. Strand displacement synthesis by RT to the PBS and PPT ends produces a blunt ended, linear dsDNA copy of the viral genome that includes long terminal repeats (LTRs) at both ends.</text>
</comment>
<comment type="function">
    <molecule>Integrase</molecule>
    <text evidence="3">Catalyzes viral DNA integration into the host chromosome, by performing a series of DNA cutting and joining reactions.</text>
</comment>
<comment type="catalytic activity">
    <reaction evidence="7">
        <text>DNA(n) + a 2'-deoxyribonucleoside 5'-triphosphate = DNA(n+1) + diphosphate</text>
        <dbReference type="Rhea" id="RHEA:22508"/>
        <dbReference type="Rhea" id="RHEA-COMP:17339"/>
        <dbReference type="Rhea" id="RHEA-COMP:17340"/>
        <dbReference type="ChEBI" id="CHEBI:33019"/>
        <dbReference type="ChEBI" id="CHEBI:61560"/>
        <dbReference type="ChEBI" id="CHEBI:173112"/>
        <dbReference type="EC" id="2.7.7.49"/>
    </reaction>
</comment>
<comment type="catalytic activity">
    <reaction evidence="7">
        <text>DNA(n) + a 2'-deoxyribonucleoside 5'-triphosphate = DNA(n+1) + diphosphate</text>
        <dbReference type="Rhea" id="RHEA:22508"/>
        <dbReference type="Rhea" id="RHEA-COMP:17339"/>
        <dbReference type="Rhea" id="RHEA-COMP:17340"/>
        <dbReference type="ChEBI" id="CHEBI:33019"/>
        <dbReference type="ChEBI" id="CHEBI:61560"/>
        <dbReference type="ChEBI" id="CHEBI:173112"/>
        <dbReference type="EC" id="2.7.7.7"/>
    </reaction>
</comment>
<comment type="catalytic activity">
    <reaction evidence="8">
        <text>Endonucleolytic cleavage to 5'-phosphomonoester.</text>
        <dbReference type="EC" id="3.1.26.4"/>
    </reaction>
</comment>
<comment type="catalytic activity">
    <reaction evidence="3">
        <text>dUTP + H2O = dUMP + diphosphate + H(+)</text>
        <dbReference type="Rhea" id="RHEA:10248"/>
        <dbReference type="ChEBI" id="CHEBI:15377"/>
        <dbReference type="ChEBI" id="CHEBI:15378"/>
        <dbReference type="ChEBI" id="CHEBI:33019"/>
        <dbReference type="ChEBI" id="CHEBI:61555"/>
        <dbReference type="ChEBI" id="CHEBI:246422"/>
        <dbReference type="EC" id="3.6.1.23"/>
    </reaction>
</comment>
<comment type="cofactor">
    <cofactor evidence="7">
        <name>Mg(2+)</name>
        <dbReference type="ChEBI" id="CHEBI:18420"/>
    </cofactor>
    <text evidence="7">The RT polymerase active site binds 2 magnesium ions.</text>
</comment>
<comment type="cofactor">
    <cofactor>
        <name>Mg(2+)</name>
        <dbReference type="ChEBI" id="CHEBI:18420"/>
    </cofactor>
    <text evidence="3">Magnesium ions are required for NC-dUTPase activity.</text>
</comment>
<comment type="activity regulation">
    <molecule>Protease</molecule>
    <text evidence="13">Inhibited by pepstatin A.</text>
</comment>
<comment type="biophysicochemical properties">
    <phDependence>
        <text evidence="13">Optimum pH is 4-6.</text>
    </phDependence>
</comment>
<comment type="subunit">
    <molecule>Matrix protein p10</molecule>
    <text evidence="14">Homodimer; when myristoylated.</text>
</comment>
<comment type="subunit">
    <molecule>Protease</molecule>
    <text evidence="13">Homodimer.</text>
</comment>
<comment type="subunit">
    <molecule>Integrase</molecule>
    <text evidence="15 18">Homooctamer.</text>
</comment>
<comment type="subunit">
    <molecule>Nucleocapsid protein-dUTPase</molecule>
    <text evidence="3 18">Homotrimer.</text>
</comment>
<comment type="subcellular location">
    <molecule>Matrix protein p10</molecule>
    <subcellularLocation>
        <location evidence="17">Virion</location>
    </subcellularLocation>
</comment>
<comment type="subcellular location">
    <molecule>Capsid protein p27</molecule>
    <subcellularLocation>
        <location evidence="17">Virion</location>
    </subcellularLocation>
</comment>
<comment type="subcellular location">
    <molecule>Nucleocapsid protein-dUTPase</molecule>
    <subcellularLocation>
        <location evidence="2">Virion</location>
    </subcellularLocation>
</comment>
<comment type="alternative products">
    <event type="ribosomal frameshifting"/>
    <isoform>
        <id>P03365-1</id>
        <name>Gag-Pro-Pol polyprotein</name>
        <sequence type="displayed"/>
    </isoform>
    <isoform>
        <id>P10271-1</id>
        <name>Gag-Pro polyprotein</name>
        <sequence type="external"/>
    </isoform>
    <isoform>
        <id>P10258-1</id>
        <name>Gag polyprotein</name>
        <sequence type="external"/>
    </isoform>
</comment>
<comment type="domain">
    <molecule>Gag-Pro-Pol polyprotein</molecule>
    <text evidence="19">Late-budding domains (L domains) are short sequence motifs essential for viral particle release. They can occur individually or in close proximity within structural proteins. They interacts with sorting cellular proteins of the multivesicular body (MVB) pathway. Most of these proteins are class E vacuolar protein sorting factors belonging to ESCRT-I, ESCRT-II or ESCRT-III complexes. Gag-p27 contains one L domain: a PTAP/PSAP motif, which interacts with the UEV domain of TSG101.</text>
</comment>
<comment type="PTM">
    <molecule>Gag-Pro-Pol polyprotein</molecule>
    <text evidence="13">Specific enzymatic cleavages in vivo yield mature proteins.</text>
</comment>
<comment type="PTM">
    <molecule>Protease</molecule>
    <text evidence="13">Released by autocatalytic processing.</text>
</comment>
<comment type="PTM">
    <molecule>Gag-Pro-Pol polyprotein</molecule>
    <text evidence="3">Myristoylated. Myristoylation of the matrix (MA) domain mediates the transport and binding of Gag polyproteins to the host plasma membrane and is required for the assembly of viral particles.</text>
</comment>
<comment type="miscellaneous">
    <molecule>Reverse transcriptase/ribonuclease H</molecule>
    <text evidence="7">The reverse transcriptase is an error-prone enzyme that lacks a proof-reading function. High mutations rate is a direct consequence of this characteristic. RT also displays frequent template switching leading to high recombination rate. Recombination mostly occurs between homologous regions of the two copackaged RNA genomes. If these two RNA molecules derive from different viral strains, reverse transcription will give rise to highly recombinated proviral DNAs.</text>
</comment>
<comment type="miscellaneous">
    <molecule>Isoform Gag-Pro-Pol polyprotein</molecule>
    <text evidence="16">Produced by -1 ribosomal frameshiftings between gag-pro and pro-pol.</text>
</comment>
<comment type="similarity">
    <text evidence="19">Belongs to the retroviral Pol polyprotein family.</text>
</comment>
<gene>
    <name type="primary">gag-pro-pol</name>
</gene>